<keyword id="KW-0274">FAD</keyword>
<keyword id="KW-0285">Flavoprotein</keyword>
<keyword id="KW-0521">NADP</keyword>
<keyword id="KW-0560">Oxidoreductase</keyword>
<keyword id="KW-1185">Reference proteome</keyword>
<feature type="chain" id="PRO_0000364866" description="Ferredoxin--NADP reductase">
    <location>
        <begin position="1"/>
        <end position="368"/>
    </location>
</feature>
<feature type="binding site" evidence="1">
    <location>
        <position position="56"/>
    </location>
    <ligand>
        <name>FAD</name>
        <dbReference type="ChEBI" id="CHEBI:57692"/>
    </ligand>
</feature>
<feature type="binding site" evidence="1">
    <location>
        <position position="64"/>
    </location>
    <ligand>
        <name>FAD</name>
        <dbReference type="ChEBI" id="CHEBI:57692"/>
    </ligand>
</feature>
<feature type="binding site" evidence="1">
    <location>
        <position position="69"/>
    </location>
    <ligand>
        <name>FAD</name>
        <dbReference type="ChEBI" id="CHEBI:57692"/>
    </ligand>
</feature>
<feature type="binding site" evidence="1">
    <location>
        <position position="109"/>
    </location>
    <ligand>
        <name>FAD</name>
        <dbReference type="ChEBI" id="CHEBI:57692"/>
    </ligand>
</feature>
<feature type="binding site" evidence="1">
    <location>
        <position position="144"/>
    </location>
    <ligand>
        <name>FAD</name>
        <dbReference type="ChEBI" id="CHEBI:57692"/>
    </ligand>
</feature>
<feature type="binding site" evidence="1">
    <location>
        <position position="310"/>
    </location>
    <ligand>
        <name>FAD</name>
        <dbReference type="ChEBI" id="CHEBI:57692"/>
    </ligand>
</feature>
<feature type="binding site" evidence="1">
    <location>
        <position position="351"/>
    </location>
    <ligand>
        <name>FAD</name>
        <dbReference type="ChEBI" id="CHEBI:57692"/>
    </ligand>
</feature>
<gene>
    <name type="ordered locus">Lcho_2791</name>
</gene>
<reference key="1">
    <citation type="submission" date="2008-03" db="EMBL/GenBank/DDBJ databases">
        <title>Complete sequence of Leptothrix cholodnii SP-6.</title>
        <authorList>
            <consortium name="US DOE Joint Genome Institute"/>
            <person name="Copeland A."/>
            <person name="Lucas S."/>
            <person name="Lapidus A."/>
            <person name="Glavina del Rio T."/>
            <person name="Dalin E."/>
            <person name="Tice H."/>
            <person name="Bruce D."/>
            <person name="Goodwin L."/>
            <person name="Pitluck S."/>
            <person name="Chertkov O."/>
            <person name="Brettin T."/>
            <person name="Detter J.C."/>
            <person name="Han C."/>
            <person name="Kuske C.R."/>
            <person name="Schmutz J."/>
            <person name="Larimer F."/>
            <person name="Land M."/>
            <person name="Hauser L."/>
            <person name="Kyrpides N."/>
            <person name="Lykidis A."/>
            <person name="Emerson D."/>
            <person name="Richardson P."/>
        </authorList>
    </citation>
    <scope>NUCLEOTIDE SEQUENCE [LARGE SCALE GENOMIC DNA]</scope>
    <source>
        <strain>ATCC 51168 / LMG 8142 / SP-6</strain>
    </source>
</reference>
<organism>
    <name type="scientific">Leptothrix cholodnii (strain ATCC 51168 / LMG 8142 / SP-6)</name>
    <name type="common">Leptothrix discophora (strain SP-6)</name>
    <dbReference type="NCBI Taxonomy" id="395495"/>
    <lineage>
        <taxon>Bacteria</taxon>
        <taxon>Pseudomonadati</taxon>
        <taxon>Pseudomonadota</taxon>
        <taxon>Betaproteobacteria</taxon>
        <taxon>Burkholderiales</taxon>
        <taxon>Sphaerotilaceae</taxon>
        <taxon>Leptothrix</taxon>
    </lineage>
</organism>
<protein>
    <recommendedName>
        <fullName evidence="1">Ferredoxin--NADP reductase</fullName>
        <shortName evidence="1">FNR</shortName>
        <shortName evidence="1">Fd-NADP(+) reductase</shortName>
        <ecNumber evidence="1">1.18.1.2</ecNumber>
    </recommendedName>
</protein>
<dbReference type="EC" id="1.18.1.2" evidence="1"/>
<dbReference type="EMBL" id="CP001013">
    <property type="protein sequence ID" value="ACB35056.1"/>
    <property type="molecule type" value="Genomic_DNA"/>
</dbReference>
<dbReference type="SMR" id="B1XWQ5"/>
<dbReference type="STRING" id="395495.Lcho_2791"/>
<dbReference type="KEGG" id="lch:Lcho_2791"/>
<dbReference type="eggNOG" id="COG0492">
    <property type="taxonomic scope" value="Bacteria"/>
</dbReference>
<dbReference type="HOGENOM" id="CLU_031864_5_5_4"/>
<dbReference type="Proteomes" id="UP000001693">
    <property type="component" value="Chromosome"/>
</dbReference>
<dbReference type="GO" id="GO:0004324">
    <property type="term" value="F:ferredoxin-NADP+ reductase activity"/>
    <property type="evidence" value="ECO:0007669"/>
    <property type="project" value="UniProtKB-UniRule"/>
</dbReference>
<dbReference type="GO" id="GO:0050660">
    <property type="term" value="F:flavin adenine dinucleotide binding"/>
    <property type="evidence" value="ECO:0007669"/>
    <property type="project" value="UniProtKB-UniRule"/>
</dbReference>
<dbReference type="GO" id="GO:0050661">
    <property type="term" value="F:NADP binding"/>
    <property type="evidence" value="ECO:0007669"/>
    <property type="project" value="UniProtKB-UniRule"/>
</dbReference>
<dbReference type="Gene3D" id="3.50.50.60">
    <property type="entry name" value="FAD/NAD(P)-binding domain"/>
    <property type="match status" value="2"/>
</dbReference>
<dbReference type="HAMAP" id="MF_01685">
    <property type="entry name" value="FENR2"/>
    <property type="match status" value="1"/>
</dbReference>
<dbReference type="InterPro" id="IPR036188">
    <property type="entry name" value="FAD/NAD-bd_sf"/>
</dbReference>
<dbReference type="InterPro" id="IPR022890">
    <property type="entry name" value="Fd--NADP_Rdtase_type_2"/>
</dbReference>
<dbReference type="InterPro" id="IPR050097">
    <property type="entry name" value="Ferredoxin-NADP_redctase_2"/>
</dbReference>
<dbReference type="PANTHER" id="PTHR48105">
    <property type="entry name" value="THIOREDOXIN REDUCTASE 1-RELATED-RELATED"/>
    <property type="match status" value="1"/>
</dbReference>
<dbReference type="Pfam" id="PF13738">
    <property type="entry name" value="Pyr_redox_3"/>
    <property type="match status" value="1"/>
</dbReference>
<dbReference type="PRINTS" id="PR00368">
    <property type="entry name" value="FADPNR"/>
</dbReference>
<dbReference type="PRINTS" id="PR00469">
    <property type="entry name" value="PNDRDTASEII"/>
</dbReference>
<dbReference type="SUPFAM" id="SSF51905">
    <property type="entry name" value="FAD/NAD(P)-binding domain"/>
    <property type="match status" value="1"/>
</dbReference>
<comment type="catalytic activity">
    <reaction evidence="1">
        <text>2 reduced [2Fe-2S]-[ferredoxin] + NADP(+) + H(+) = 2 oxidized [2Fe-2S]-[ferredoxin] + NADPH</text>
        <dbReference type="Rhea" id="RHEA:20125"/>
        <dbReference type="Rhea" id="RHEA-COMP:10000"/>
        <dbReference type="Rhea" id="RHEA-COMP:10001"/>
        <dbReference type="ChEBI" id="CHEBI:15378"/>
        <dbReference type="ChEBI" id="CHEBI:33737"/>
        <dbReference type="ChEBI" id="CHEBI:33738"/>
        <dbReference type="ChEBI" id="CHEBI:57783"/>
        <dbReference type="ChEBI" id="CHEBI:58349"/>
        <dbReference type="EC" id="1.18.1.2"/>
    </reaction>
</comment>
<comment type="cofactor">
    <cofactor evidence="1">
        <name>FAD</name>
        <dbReference type="ChEBI" id="CHEBI:57692"/>
    </cofactor>
    <text evidence="1">Binds 1 FAD per subunit.</text>
</comment>
<comment type="subunit">
    <text evidence="1">Homodimer.</text>
</comment>
<comment type="similarity">
    <text evidence="1">Belongs to the ferredoxin--NADP reductase type 2 family.</text>
</comment>
<sequence length="368" mass="39000">MQPTRQTPSATAAISGGGGASAGAIETDALVIGAGPVGLFQVFQLGLQDLRCHVVDVLSQPGGQCAELYPAKPIYDIPALPVCSGTELVERLLQQVAPFDPVLHLGQEVESLAPRADGRFDIGTSAGTQFIARAVFIAAGVGAFSPRRLKLPGLDTLAASCVSHQAPDVSACQGQTVLVHGGDDRALDWACRLAEHGVAVSLLYRRDVYPAAPEQVRRLELLASQGRVTRRVGQPTQARADAAGQLTGVDHLDPSGQTHHEPATRLFVSLGLSPRLGPLSSWGLQMERKLLDVEPSRFETSLPGVYAVGDINSYPGKLKLIVCGFHEATLAAWAAAHRLRPDAPHHLEYTTSSARLQRLLGVLPRGAE</sequence>
<accession>B1XWQ5</accession>
<proteinExistence type="inferred from homology"/>
<evidence type="ECO:0000255" key="1">
    <source>
        <dbReference type="HAMAP-Rule" id="MF_01685"/>
    </source>
</evidence>
<name>FENR_LEPCP</name>